<sequence>MAEITASLVKELRERTGAGMMECKKALVEANGDIELAIDNMRKSGQAKAAKKAGRVAAEGVILARIGAGFGVLVEMNCETDFVAKDAGFLGLANEVADFALANKGTTIETLAAQFEEKRAALVAKIGENMNIRRVQYLDGQVIAQYLHGAKIGVLVAGEGSDEELKKVAMHVAASRPEFVNPEDVSAEVVAHERQIQIDIAINSGKPKEIAEKMVEGRMKKFTGEVSLTGQAFVMDPSQSVGDYLKSVNTKVTNFIRLEVGEGIEKVEEDFAAEVAKITGGNA</sequence>
<protein>
    <recommendedName>
        <fullName evidence="1">Elongation factor Ts</fullName>
        <shortName evidence="1">EF-Ts</shortName>
    </recommendedName>
</protein>
<reference key="1">
    <citation type="journal article" date="2008" name="J. Bacteriol.">
        <title>The complete genome sequence of Actinobacillus pleuropneumoniae L20 (serotype 5b).</title>
        <authorList>
            <person name="Foote S.J."/>
            <person name="Bosse J.T."/>
            <person name="Bouevitch A.B."/>
            <person name="Langford P.R."/>
            <person name="Young N.M."/>
            <person name="Nash J.H.E."/>
        </authorList>
    </citation>
    <scope>NUCLEOTIDE SEQUENCE [LARGE SCALE GENOMIC DNA]</scope>
    <source>
        <strain>L20</strain>
    </source>
</reference>
<dbReference type="EMBL" id="CP000569">
    <property type="protein sequence ID" value="ABN73669.1"/>
    <property type="molecule type" value="Genomic_DNA"/>
</dbReference>
<dbReference type="RefSeq" id="WP_005603944.1">
    <property type="nucleotide sequence ID" value="NC_009053.1"/>
</dbReference>
<dbReference type="SMR" id="A3MZT3"/>
<dbReference type="STRING" id="416269.APL_0567"/>
<dbReference type="EnsemblBacteria" id="ABN73669">
    <property type="protein sequence ID" value="ABN73669"/>
    <property type="gene ID" value="APL_0567"/>
</dbReference>
<dbReference type="KEGG" id="apl:APL_0567"/>
<dbReference type="eggNOG" id="COG0264">
    <property type="taxonomic scope" value="Bacteria"/>
</dbReference>
<dbReference type="HOGENOM" id="CLU_047155_0_2_6"/>
<dbReference type="Proteomes" id="UP000001432">
    <property type="component" value="Chromosome"/>
</dbReference>
<dbReference type="GO" id="GO:0005737">
    <property type="term" value="C:cytoplasm"/>
    <property type="evidence" value="ECO:0007669"/>
    <property type="project" value="UniProtKB-SubCell"/>
</dbReference>
<dbReference type="GO" id="GO:0003746">
    <property type="term" value="F:translation elongation factor activity"/>
    <property type="evidence" value="ECO:0007669"/>
    <property type="project" value="UniProtKB-UniRule"/>
</dbReference>
<dbReference type="CDD" id="cd14275">
    <property type="entry name" value="UBA_EF-Ts"/>
    <property type="match status" value="1"/>
</dbReference>
<dbReference type="FunFam" id="1.10.286.20:FF:000001">
    <property type="entry name" value="Elongation factor Ts"/>
    <property type="match status" value="1"/>
</dbReference>
<dbReference type="FunFam" id="1.10.8.10:FF:000001">
    <property type="entry name" value="Elongation factor Ts"/>
    <property type="match status" value="1"/>
</dbReference>
<dbReference type="FunFam" id="3.30.479.20:FF:000001">
    <property type="entry name" value="Elongation factor Ts"/>
    <property type="match status" value="1"/>
</dbReference>
<dbReference type="Gene3D" id="1.10.286.20">
    <property type="match status" value="1"/>
</dbReference>
<dbReference type="Gene3D" id="1.10.8.10">
    <property type="entry name" value="DNA helicase RuvA subunit, C-terminal domain"/>
    <property type="match status" value="1"/>
</dbReference>
<dbReference type="Gene3D" id="3.30.479.20">
    <property type="entry name" value="Elongation factor Ts, dimerisation domain"/>
    <property type="match status" value="2"/>
</dbReference>
<dbReference type="HAMAP" id="MF_00050">
    <property type="entry name" value="EF_Ts"/>
    <property type="match status" value="1"/>
</dbReference>
<dbReference type="InterPro" id="IPR036402">
    <property type="entry name" value="EF-Ts_dimer_sf"/>
</dbReference>
<dbReference type="InterPro" id="IPR001816">
    <property type="entry name" value="Transl_elong_EFTs/EF1B"/>
</dbReference>
<dbReference type="InterPro" id="IPR014039">
    <property type="entry name" value="Transl_elong_EFTs/EF1B_dimer"/>
</dbReference>
<dbReference type="InterPro" id="IPR018101">
    <property type="entry name" value="Transl_elong_Ts_CS"/>
</dbReference>
<dbReference type="InterPro" id="IPR009060">
    <property type="entry name" value="UBA-like_sf"/>
</dbReference>
<dbReference type="NCBIfam" id="TIGR00116">
    <property type="entry name" value="tsf"/>
    <property type="match status" value="1"/>
</dbReference>
<dbReference type="PANTHER" id="PTHR11741">
    <property type="entry name" value="ELONGATION FACTOR TS"/>
    <property type="match status" value="1"/>
</dbReference>
<dbReference type="PANTHER" id="PTHR11741:SF0">
    <property type="entry name" value="ELONGATION FACTOR TS, MITOCHONDRIAL"/>
    <property type="match status" value="1"/>
</dbReference>
<dbReference type="Pfam" id="PF00889">
    <property type="entry name" value="EF_TS"/>
    <property type="match status" value="1"/>
</dbReference>
<dbReference type="SUPFAM" id="SSF54713">
    <property type="entry name" value="Elongation factor Ts (EF-Ts), dimerisation domain"/>
    <property type="match status" value="2"/>
</dbReference>
<dbReference type="SUPFAM" id="SSF46934">
    <property type="entry name" value="UBA-like"/>
    <property type="match status" value="1"/>
</dbReference>
<dbReference type="PROSITE" id="PS01126">
    <property type="entry name" value="EF_TS_1"/>
    <property type="match status" value="1"/>
</dbReference>
<dbReference type="PROSITE" id="PS01127">
    <property type="entry name" value="EF_TS_2"/>
    <property type="match status" value="1"/>
</dbReference>
<organism>
    <name type="scientific">Actinobacillus pleuropneumoniae serotype 5b (strain L20)</name>
    <dbReference type="NCBI Taxonomy" id="416269"/>
    <lineage>
        <taxon>Bacteria</taxon>
        <taxon>Pseudomonadati</taxon>
        <taxon>Pseudomonadota</taxon>
        <taxon>Gammaproteobacteria</taxon>
        <taxon>Pasteurellales</taxon>
        <taxon>Pasteurellaceae</taxon>
        <taxon>Actinobacillus</taxon>
    </lineage>
</organism>
<proteinExistence type="inferred from homology"/>
<feature type="chain" id="PRO_1000006046" description="Elongation factor Ts">
    <location>
        <begin position="1"/>
        <end position="283"/>
    </location>
</feature>
<feature type="region of interest" description="Involved in Mg(2+) ion dislocation from EF-Tu" evidence="1">
    <location>
        <begin position="80"/>
        <end position="83"/>
    </location>
</feature>
<accession>A3MZT3</accession>
<comment type="function">
    <text evidence="1">Associates with the EF-Tu.GDP complex and induces the exchange of GDP to GTP. It remains bound to the aminoacyl-tRNA.EF-Tu.GTP complex up to the GTP hydrolysis stage on the ribosome.</text>
</comment>
<comment type="subcellular location">
    <subcellularLocation>
        <location evidence="1">Cytoplasm</location>
    </subcellularLocation>
</comment>
<comment type="similarity">
    <text evidence="1">Belongs to the EF-Ts family.</text>
</comment>
<gene>
    <name evidence="1" type="primary">tsf</name>
    <name type="ordered locus">APL_0567</name>
</gene>
<name>EFTS_ACTP2</name>
<keyword id="KW-0963">Cytoplasm</keyword>
<keyword id="KW-0251">Elongation factor</keyword>
<keyword id="KW-0648">Protein biosynthesis</keyword>
<keyword id="KW-1185">Reference proteome</keyword>
<evidence type="ECO:0000255" key="1">
    <source>
        <dbReference type="HAMAP-Rule" id="MF_00050"/>
    </source>
</evidence>